<comment type="function">
    <text evidence="1">Part of ribonuclease P, a protein complex that generates mature tRNA molecules by cleaving their 5'-ends.</text>
</comment>
<comment type="catalytic activity">
    <reaction evidence="1">
        <text>Endonucleolytic cleavage of RNA, removing 5'-extranucleotides from tRNA precursor.</text>
        <dbReference type="EC" id="3.1.26.5"/>
    </reaction>
</comment>
<comment type="cofactor">
    <cofactor evidence="1">
        <name>Zn(2+)</name>
        <dbReference type="ChEBI" id="CHEBI:29105"/>
    </cofactor>
    <text evidence="1">Binds 1 zinc ion per subunit.</text>
</comment>
<comment type="subunit">
    <text evidence="1">Consists of a catalytic RNA component and at least 4-5 protein subunits.</text>
</comment>
<comment type="subcellular location">
    <subcellularLocation>
        <location evidence="1">Cytoplasm</location>
    </subcellularLocation>
</comment>
<comment type="similarity">
    <text evidence="1">Belongs to the eukaryotic/archaeal RNase P protein component 4 family.</text>
</comment>
<feature type="chain" id="PRO_1000194597" description="Ribonuclease P protein component 4">
    <location>
        <begin position="1"/>
        <end position="104"/>
    </location>
</feature>
<feature type="binding site" evidence="1">
    <location>
        <position position="63"/>
    </location>
    <ligand>
        <name>Zn(2+)</name>
        <dbReference type="ChEBI" id="CHEBI:29105"/>
    </ligand>
</feature>
<feature type="binding site" evidence="1">
    <location>
        <position position="66"/>
    </location>
    <ligand>
        <name>Zn(2+)</name>
        <dbReference type="ChEBI" id="CHEBI:29105"/>
    </ligand>
</feature>
<feature type="binding site" evidence="1">
    <location>
        <position position="89"/>
    </location>
    <ligand>
        <name>Zn(2+)</name>
        <dbReference type="ChEBI" id="CHEBI:29105"/>
    </ligand>
</feature>
<feature type="binding site" evidence="1">
    <location>
        <position position="92"/>
    </location>
    <ligand>
        <name>Zn(2+)</name>
        <dbReference type="ChEBI" id="CHEBI:29105"/>
    </ligand>
</feature>
<protein>
    <recommendedName>
        <fullName evidence="1">Ribonuclease P protein component 4</fullName>
        <shortName evidence="1">RNase P component 4</shortName>
        <ecNumber evidence="1">3.1.26.5</ecNumber>
    </recommendedName>
    <alternativeName>
        <fullName evidence="1">Rpp21</fullName>
    </alternativeName>
</protein>
<reference key="1">
    <citation type="journal article" date="2015" name="Microbiology">
        <title>Genome of Methanoregula boonei 6A8 reveals adaptations to oligotrophic peatland environments.</title>
        <authorList>
            <person name="Braeuer S."/>
            <person name="Cadillo-Quiroz H."/>
            <person name="Kyrpides N."/>
            <person name="Woyke T."/>
            <person name="Goodwin L."/>
            <person name="Detter C."/>
            <person name="Podell S."/>
            <person name="Yavitt J.B."/>
            <person name="Zinder S.H."/>
        </authorList>
    </citation>
    <scope>NUCLEOTIDE SEQUENCE [LARGE SCALE GENOMIC DNA]</scope>
    <source>
        <strain>DSM 21154 / JCM 14090 / 6A8</strain>
    </source>
</reference>
<evidence type="ECO:0000255" key="1">
    <source>
        <dbReference type="HAMAP-Rule" id="MF_00757"/>
    </source>
</evidence>
<accession>A7I9J3</accession>
<sequence length="104" mass="12378">MKDKKRPPSVKPLARERIAVLFSEAEKIFHENPGYSDRYVALARKISMKERVRIDHEYRRRFCHHCSRYLVPGANMRVRVHHGWVAVTCLGCKKTTRYRVERTP</sequence>
<proteinExistence type="inferred from homology"/>
<name>RNP4_METB6</name>
<dbReference type="EC" id="3.1.26.5" evidence="1"/>
<dbReference type="EMBL" id="CP000780">
    <property type="protein sequence ID" value="ABS56404.1"/>
    <property type="molecule type" value="Genomic_DNA"/>
</dbReference>
<dbReference type="RefSeq" id="WP_012107457.1">
    <property type="nucleotide sequence ID" value="NC_009712.1"/>
</dbReference>
<dbReference type="SMR" id="A7I9J3"/>
<dbReference type="STRING" id="456442.Mboo_1889"/>
<dbReference type="GeneID" id="5410731"/>
<dbReference type="KEGG" id="mbn:Mboo_1889"/>
<dbReference type="eggNOG" id="arCOG04345">
    <property type="taxonomic scope" value="Archaea"/>
</dbReference>
<dbReference type="HOGENOM" id="CLU_079140_3_0_2"/>
<dbReference type="OrthoDB" id="10058at2157"/>
<dbReference type="Proteomes" id="UP000002408">
    <property type="component" value="Chromosome"/>
</dbReference>
<dbReference type="GO" id="GO:0005737">
    <property type="term" value="C:cytoplasm"/>
    <property type="evidence" value="ECO:0007669"/>
    <property type="project" value="UniProtKB-SubCell"/>
</dbReference>
<dbReference type="GO" id="GO:0030677">
    <property type="term" value="C:ribonuclease P complex"/>
    <property type="evidence" value="ECO:0007669"/>
    <property type="project" value="UniProtKB-UniRule"/>
</dbReference>
<dbReference type="GO" id="GO:0004526">
    <property type="term" value="F:ribonuclease P activity"/>
    <property type="evidence" value="ECO:0007669"/>
    <property type="project" value="UniProtKB-UniRule"/>
</dbReference>
<dbReference type="GO" id="GO:0008270">
    <property type="term" value="F:zinc ion binding"/>
    <property type="evidence" value="ECO:0007669"/>
    <property type="project" value="UniProtKB-UniRule"/>
</dbReference>
<dbReference type="GO" id="GO:0001682">
    <property type="term" value="P:tRNA 5'-leader removal"/>
    <property type="evidence" value="ECO:0007669"/>
    <property type="project" value="UniProtKB-UniRule"/>
</dbReference>
<dbReference type="Gene3D" id="6.20.50.20">
    <property type="match status" value="1"/>
</dbReference>
<dbReference type="Gene3D" id="1.20.5.420">
    <property type="entry name" value="Immunoglobulin FC, subunit C"/>
    <property type="match status" value="1"/>
</dbReference>
<dbReference type="HAMAP" id="MF_00757">
    <property type="entry name" value="RNase_P_4"/>
    <property type="match status" value="1"/>
</dbReference>
<dbReference type="InterPro" id="IPR016432">
    <property type="entry name" value="RNP4"/>
</dbReference>
<dbReference type="InterPro" id="IPR007175">
    <property type="entry name" value="Rpr2/Snm1/Rpp21"/>
</dbReference>
<dbReference type="PANTHER" id="PTHR14742:SF0">
    <property type="entry name" value="RIBONUCLEASE P PROTEIN SUBUNIT P21"/>
    <property type="match status" value="1"/>
</dbReference>
<dbReference type="PANTHER" id="PTHR14742">
    <property type="entry name" value="RIBONUCLEASE P SUBUNIT P21"/>
    <property type="match status" value="1"/>
</dbReference>
<dbReference type="Pfam" id="PF04032">
    <property type="entry name" value="Rpr2"/>
    <property type="match status" value="1"/>
</dbReference>
<dbReference type="PIRSF" id="PIRSF004878">
    <property type="entry name" value="RNase_P_4"/>
    <property type="match status" value="1"/>
</dbReference>
<keyword id="KW-0963">Cytoplasm</keyword>
<keyword id="KW-0255">Endonuclease</keyword>
<keyword id="KW-0378">Hydrolase</keyword>
<keyword id="KW-0479">Metal-binding</keyword>
<keyword id="KW-0540">Nuclease</keyword>
<keyword id="KW-1185">Reference proteome</keyword>
<keyword id="KW-0819">tRNA processing</keyword>
<keyword id="KW-0862">Zinc</keyword>
<organism>
    <name type="scientific">Methanoregula boonei (strain DSM 21154 / JCM 14090 / 6A8)</name>
    <dbReference type="NCBI Taxonomy" id="456442"/>
    <lineage>
        <taxon>Archaea</taxon>
        <taxon>Methanobacteriati</taxon>
        <taxon>Methanobacteriota</taxon>
        <taxon>Stenosarchaea group</taxon>
        <taxon>Methanomicrobia</taxon>
        <taxon>Methanomicrobiales</taxon>
        <taxon>Methanoregulaceae</taxon>
        <taxon>Methanoregula</taxon>
    </lineage>
</organism>
<gene>
    <name evidence="1" type="primary">rnp4</name>
    <name type="ordered locus">Mboo_1889</name>
</gene>